<sequence>MADPRVRQIKIKTGVVKRLVKEKVMYEKEAKQQEEKIEKMKAEDGENYAIKKQAEILQESRMMIPDCQRRLEAAYTDLRQILESEKDLEEAEEYKEARIVLDSVKLEA</sequence>
<name>TBCA_RAT</name>
<comment type="function">
    <text evidence="1">Tubulin-folding protein; involved in the early step of the tubulin folding pathway.</text>
</comment>
<comment type="subunit">
    <text evidence="1">Supercomplex made of cofactors A to E. Cofactors A and D function by capturing and stabilizing tubulin in a quasi-native conformation. Cofactor E binds to the cofactor D-tubulin complex; interaction with cofactor C then causes the release of tubulin polypeptides that are committed to the native state (By similarity).</text>
</comment>
<comment type="subcellular location">
    <subcellularLocation>
        <location evidence="1">Cytoplasm</location>
        <location evidence="1">Cytoskeleton</location>
    </subcellularLocation>
</comment>
<comment type="similarity">
    <text evidence="3">Belongs to the TBCA family.</text>
</comment>
<accession>Q6PEC1</accession>
<evidence type="ECO:0000250" key="1"/>
<evidence type="ECO:0000250" key="2">
    <source>
        <dbReference type="UniProtKB" id="P80584"/>
    </source>
</evidence>
<evidence type="ECO:0000305" key="3"/>
<organism>
    <name type="scientific">Rattus norvegicus</name>
    <name type="common">Rat</name>
    <dbReference type="NCBI Taxonomy" id="10116"/>
    <lineage>
        <taxon>Eukaryota</taxon>
        <taxon>Metazoa</taxon>
        <taxon>Chordata</taxon>
        <taxon>Craniata</taxon>
        <taxon>Vertebrata</taxon>
        <taxon>Euteleostomi</taxon>
        <taxon>Mammalia</taxon>
        <taxon>Eutheria</taxon>
        <taxon>Euarchontoglires</taxon>
        <taxon>Glires</taxon>
        <taxon>Rodentia</taxon>
        <taxon>Myomorpha</taxon>
        <taxon>Muroidea</taxon>
        <taxon>Muridae</taxon>
        <taxon>Murinae</taxon>
        <taxon>Rattus</taxon>
    </lineage>
</organism>
<keyword id="KW-0007">Acetylation</keyword>
<keyword id="KW-0143">Chaperone</keyword>
<keyword id="KW-0963">Cytoplasm</keyword>
<keyword id="KW-0206">Cytoskeleton</keyword>
<keyword id="KW-0903">Direct protein sequencing</keyword>
<keyword id="KW-0493">Microtubule</keyword>
<keyword id="KW-1185">Reference proteome</keyword>
<proteinExistence type="evidence at protein level"/>
<feature type="initiator methionine" description="Removed" evidence="2">
    <location>
        <position position="1"/>
    </location>
</feature>
<feature type="chain" id="PRO_0000287583" description="Tubulin-specific chaperone A">
    <location>
        <begin position="2"/>
        <end position="108"/>
    </location>
</feature>
<feature type="modified residue" description="N-acetylalanine" evidence="2">
    <location>
        <position position="2"/>
    </location>
</feature>
<dbReference type="EMBL" id="BC058155">
    <property type="protein sequence ID" value="AAH58155.1"/>
    <property type="molecule type" value="mRNA"/>
</dbReference>
<dbReference type="RefSeq" id="NP_001013263.1">
    <property type="nucleotide sequence ID" value="NM_001013245.3"/>
</dbReference>
<dbReference type="SMR" id="Q6PEC1"/>
<dbReference type="FunCoup" id="Q6PEC1">
    <property type="interactions" value="1988"/>
</dbReference>
<dbReference type="STRING" id="10116.ENSRNOP00000067864"/>
<dbReference type="iPTMnet" id="Q6PEC1"/>
<dbReference type="PhosphoSitePlus" id="Q6PEC1"/>
<dbReference type="jPOST" id="Q6PEC1"/>
<dbReference type="PaxDb" id="10116-ENSRNOP00000021543"/>
<dbReference type="Ensembl" id="ENSRNOT00000073688.3">
    <property type="protein sequence ID" value="ENSRNOP00000067864.2"/>
    <property type="gene ID" value="ENSRNOG00000048342.3"/>
</dbReference>
<dbReference type="GeneID" id="366995"/>
<dbReference type="KEGG" id="rno:366995"/>
<dbReference type="AGR" id="RGD:1311538"/>
<dbReference type="CTD" id="6902"/>
<dbReference type="RGD" id="1311538">
    <property type="gene designation" value="Tbca"/>
</dbReference>
<dbReference type="eggNOG" id="KOG3470">
    <property type="taxonomic scope" value="Eukaryota"/>
</dbReference>
<dbReference type="GeneTree" id="ENSGT00390000009710"/>
<dbReference type="HOGENOM" id="CLU_130569_1_0_1"/>
<dbReference type="InParanoid" id="Q6PEC1"/>
<dbReference type="OMA" id="VIQECIM"/>
<dbReference type="OrthoDB" id="296187at2759"/>
<dbReference type="PhylomeDB" id="Q6PEC1"/>
<dbReference type="PRO" id="PR:Q6PEC1"/>
<dbReference type="Proteomes" id="UP000002494">
    <property type="component" value="Chromosome 2"/>
</dbReference>
<dbReference type="Bgee" id="ENSRNOG00000048342">
    <property type="expression patterns" value="Expressed in ovary and 20 other cell types or tissues"/>
</dbReference>
<dbReference type="GO" id="GO:0005737">
    <property type="term" value="C:cytoplasm"/>
    <property type="evidence" value="ECO:0007669"/>
    <property type="project" value="UniProtKB-KW"/>
</dbReference>
<dbReference type="GO" id="GO:0005874">
    <property type="term" value="C:microtubule"/>
    <property type="evidence" value="ECO:0007669"/>
    <property type="project" value="UniProtKB-KW"/>
</dbReference>
<dbReference type="GO" id="GO:0015630">
    <property type="term" value="C:microtubule cytoskeleton"/>
    <property type="evidence" value="ECO:0000318"/>
    <property type="project" value="GO_Central"/>
</dbReference>
<dbReference type="GO" id="GO:0048487">
    <property type="term" value="F:beta-tubulin binding"/>
    <property type="evidence" value="ECO:0007669"/>
    <property type="project" value="InterPro"/>
</dbReference>
<dbReference type="GO" id="GO:0015631">
    <property type="term" value="F:tubulin binding"/>
    <property type="evidence" value="ECO:0000318"/>
    <property type="project" value="GO_Central"/>
</dbReference>
<dbReference type="GO" id="GO:0007023">
    <property type="term" value="P:post-chaperonin tubulin folding pathway"/>
    <property type="evidence" value="ECO:0007669"/>
    <property type="project" value="InterPro"/>
</dbReference>
<dbReference type="GO" id="GO:0006457">
    <property type="term" value="P:protein folding"/>
    <property type="evidence" value="ECO:0000318"/>
    <property type="project" value="GO_Central"/>
</dbReference>
<dbReference type="GO" id="GO:0007021">
    <property type="term" value="P:tubulin complex assembly"/>
    <property type="evidence" value="ECO:0000318"/>
    <property type="project" value="GO_Central"/>
</dbReference>
<dbReference type="FunFam" id="1.20.58.90:FF:000009">
    <property type="entry name" value="Tubulin-specific chaperone A"/>
    <property type="match status" value="1"/>
</dbReference>
<dbReference type="Gene3D" id="1.20.58.90">
    <property type="match status" value="1"/>
</dbReference>
<dbReference type="InterPro" id="IPR004226">
    <property type="entry name" value="TBCA"/>
</dbReference>
<dbReference type="InterPro" id="IPR036126">
    <property type="entry name" value="TBCA_sf"/>
</dbReference>
<dbReference type="PANTHER" id="PTHR21500">
    <property type="entry name" value="TUBULIN-SPECIFIC CHAPERONE A"/>
    <property type="match status" value="1"/>
</dbReference>
<dbReference type="PANTHER" id="PTHR21500:SF0">
    <property type="entry name" value="TUBULIN-SPECIFIC CHAPERONE A"/>
    <property type="match status" value="1"/>
</dbReference>
<dbReference type="Pfam" id="PF02970">
    <property type="entry name" value="TBCA"/>
    <property type="match status" value="1"/>
</dbReference>
<dbReference type="SUPFAM" id="SSF46988">
    <property type="entry name" value="Tubulin chaperone cofactor A"/>
    <property type="match status" value="1"/>
</dbReference>
<reference key="1">
    <citation type="journal article" date="2004" name="Genome Res.">
        <title>The status, quality, and expansion of the NIH full-length cDNA project: the Mammalian Gene Collection (MGC).</title>
        <authorList>
            <consortium name="The MGC Project Team"/>
        </authorList>
    </citation>
    <scope>NUCLEOTIDE SEQUENCE [LARGE SCALE MRNA]</scope>
    <source>
        <tissue>Pituitary</tissue>
    </source>
</reference>
<reference key="2">
    <citation type="submission" date="2007-04" db="UniProtKB">
        <authorList>
            <person name="Lubec G."/>
            <person name="Chen W.-Q."/>
        </authorList>
    </citation>
    <scope>PROTEIN SEQUENCE OF 53-61; 70-79 AND 99-105</scope>
    <scope>IDENTIFICATION BY MASS SPECTROMETRY</scope>
    <source>
        <strain>Sprague-Dawley</strain>
        <tissue>Hippocampus</tissue>
    </source>
</reference>
<protein>
    <recommendedName>
        <fullName>Tubulin-specific chaperone A</fullName>
    </recommendedName>
    <alternativeName>
        <fullName>TCP1-chaperonin cofactor A</fullName>
    </alternativeName>
    <alternativeName>
        <fullName>Tubulin-folding cofactor A</fullName>
        <shortName>CFA</shortName>
    </alternativeName>
</protein>
<gene>
    <name type="primary">Tbca</name>
</gene>